<organism>
    <name type="scientific">Shigella boydii serotype 18 (strain CDC 3083-94 / BS512)</name>
    <dbReference type="NCBI Taxonomy" id="344609"/>
    <lineage>
        <taxon>Bacteria</taxon>
        <taxon>Pseudomonadati</taxon>
        <taxon>Pseudomonadota</taxon>
        <taxon>Gammaproteobacteria</taxon>
        <taxon>Enterobacterales</taxon>
        <taxon>Enterobacteriaceae</taxon>
        <taxon>Shigella</taxon>
    </lineage>
</organism>
<protein>
    <recommendedName>
        <fullName evidence="1">D-tagatose-1,6-bisphosphate aldolase subunit GatY</fullName>
        <shortName evidence="1">TBPA</shortName>
        <shortName evidence="1">TagBP aldolase</shortName>
        <ecNumber evidence="1">4.1.2.40</ecNumber>
    </recommendedName>
    <alternativeName>
        <fullName evidence="1">D-tagatose-bisphosphate aldolase class II</fullName>
    </alternativeName>
    <alternativeName>
        <fullName evidence="1">Tagatose-bisphosphate aldolase</fullName>
    </alternativeName>
</protein>
<keyword id="KW-0298">Galactitol metabolism</keyword>
<keyword id="KW-0456">Lyase</keyword>
<keyword id="KW-0479">Metal-binding</keyword>
<keyword id="KW-1185">Reference proteome</keyword>
<keyword id="KW-0862">Zinc</keyword>
<sequence>MYVVSTKQMLNNAQRGGYAVPAFNIHNLETMQVVVETAANLHAPVIIAGTPGTFTHAGTENLLALVSAMAKQYHHPLAIHLDHHTKFDDIAQKVRSGVRSVMIDASHLPFAQNISRVKEVVDFCHRFDVSVEAELGQLGGQEDDVQVNEADAFYTNPAQAREFAEATGIDSLAVAIGTAHGMYASAPALDFSRLENIRQWVNLPLVLHGASGLSTKDIQQTIKLGICKINVATELKNAFSQALKNYLTEHPEATDPRDYLQSAKSAMRDVVSKVIADCGCEGRA</sequence>
<feature type="chain" id="PRO_0000355352" description="D-tagatose-1,6-bisphosphate aldolase subunit GatY">
    <location>
        <begin position="1"/>
        <end position="284"/>
    </location>
</feature>
<feature type="active site" description="Proton donor" evidence="1">
    <location>
        <position position="82"/>
    </location>
</feature>
<feature type="binding site" evidence="1">
    <location>
        <position position="83"/>
    </location>
    <ligand>
        <name>Zn(2+)</name>
        <dbReference type="ChEBI" id="CHEBI:29105"/>
        <note>catalytic</note>
    </ligand>
</feature>
<feature type="binding site" evidence="1">
    <location>
        <position position="180"/>
    </location>
    <ligand>
        <name>Zn(2+)</name>
        <dbReference type="ChEBI" id="CHEBI:29105"/>
        <note>catalytic</note>
    </ligand>
</feature>
<feature type="binding site" evidence="1">
    <location>
        <position position="181"/>
    </location>
    <ligand>
        <name>dihydroxyacetone phosphate</name>
        <dbReference type="ChEBI" id="CHEBI:57642"/>
    </ligand>
</feature>
<feature type="binding site" evidence="1">
    <location>
        <position position="208"/>
    </location>
    <ligand>
        <name>Zn(2+)</name>
        <dbReference type="ChEBI" id="CHEBI:29105"/>
        <note>catalytic</note>
    </ligand>
</feature>
<feature type="binding site" evidence="1">
    <location>
        <begin position="209"/>
        <end position="211"/>
    </location>
    <ligand>
        <name>dihydroxyacetone phosphate</name>
        <dbReference type="ChEBI" id="CHEBI:57642"/>
    </ligand>
</feature>
<feature type="binding site" evidence="1">
    <location>
        <begin position="230"/>
        <end position="233"/>
    </location>
    <ligand>
        <name>dihydroxyacetone phosphate</name>
        <dbReference type="ChEBI" id="CHEBI:57642"/>
    </ligand>
</feature>
<proteinExistence type="inferred from homology"/>
<gene>
    <name evidence="1" type="primary">gatY</name>
    <name type="ordered locus">SbBS512_E1142</name>
</gene>
<accession>B2TY92</accession>
<reference key="1">
    <citation type="submission" date="2008-05" db="EMBL/GenBank/DDBJ databases">
        <title>Complete sequence of Shigella boydii serotype 18 strain BS512.</title>
        <authorList>
            <person name="Rasko D.A."/>
            <person name="Rosovitz M."/>
            <person name="Maurelli A.T."/>
            <person name="Myers G."/>
            <person name="Seshadri R."/>
            <person name="Cer R."/>
            <person name="Jiang L."/>
            <person name="Ravel J."/>
            <person name="Sebastian Y."/>
        </authorList>
    </citation>
    <scope>NUCLEOTIDE SEQUENCE [LARGE SCALE GENOMIC DNA]</scope>
    <source>
        <strain>CDC 3083-94 / BS512</strain>
    </source>
</reference>
<dbReference type="EC" id="4.1.2.40" evidence="1"/>
<dbReference type="EMBL" id="CP001063">
    <property type="protein sequence ID" value="ACD07739.1"/>
    <property type="molecule type" value="Genomic_DNA"/>
</dbReference>
<dbReference type="RefSeq" id="WP_000289788.1">
    <property type="nucleotide sequence ID" value="NC_010658.1"/>
</dbReference>
<dbReference type="SMR" id="B2TY92"/>
<dbReference type="STRING" id="344609.SbBS512_E1142"/>
<dbReference type="KEGG" id="sbc:SbBS512_E1142"/>
<dbReference type="HOGENOM" id="CLU_040088_0_1_6"/>
<dbReference type="UniPathway" id="UPA00704">
    <property type="reaction ID" value="UER00716"/>
</dbReference>
<dbReference type="Proteomes" id="UP000001030">
    <property type="component" value="Chromosome"/>
</dbReference>
<dbReference type="GO" id="GO:0005829">
    <property type="term" value="C:cytosol"/>
    <property type="evidence" value="ECO:0007669"/>
    <property type="project" value="TreeGrafter"/>
</dbReference>
<dbReference type="GO" id="GO:0009025">
    <property type="term" value="F:tagatose-bisphosphate aldolase activity"/>
    <property type="evidence" value="ECO:0007669"/>
    <property type="project" value="UniProtKB-UniRule"/>
</dbReference>
<dbReference type="GO" id="GO:0008270">
    <property type="term" value="F:zinc ion binding"/>
    <property type="evidence" value="ECO:0007669"/>
    <property type="project" value="UniProtKB-UniRule"/>
</dbReference>
<dbReference type="GO" id="GO:2001059">
    <property type="term" value="P:D-tagatose 6-phosphate catabolic process"/>
    <property type="evidence" value="ECO:0007669"/>
    <property type="project" value="UniProtKB-UniRule"/>
</dbReference>
<dbReference type="GO" id="GO:0019404">
    <property type="term" value="P:galactitol catabolic process"/>
    <property type="evidence" value="ECO:0007669"/>
    <property type="project" value="InterPro"/>
</dbReference>
<dbReference type="CDD" id="cd00947">
    <property type="entry name" value="TBP_aldolase_IIB"/>
    <property type="match status" value="1"/>
</dbReference>
<dbReference type="FunFam" id="3.20.20.70:FF:000043">
    <property type="entry name" value="D-tagatose-1,6-bisphosphate aldolase subunit GatY"/>
    <property type="match status" value="1"/>
</dbReference>
<dbReference type="Gene3D" id="3.20.20.70">
    <property type="entry name" value="Aldolase class I"/>
    <property type="match status" value="1"/>
</dbReference>
<dbReference type="HAMAP" id="MF_01294">
    <property type="entry name" value="TagBP_aldolase_GatY"/>
    <property type="match status" value="1"/>
</dbReference>
<dbReference type="InterPro" id="IPR013785">
    <property type="entry name" value="Aldolase_TIM"/>
</dbReference>
<dbReference type="InterPro" id="IPR050246">
    <property type="entry name" value="Class_II_FBP_aldolase"/>
</dbReference>
<dbReference type="InterPro" id="IPR000771">
    <property type="entry name" value="FBA_II"/>
</dbReference>
<dbReference type="InterPro" id="IPR011288">
    <property type="entry name" value="TagBP_ald_KbaY/GatY"/>
</dbReference>
<dbReference type="InterPro" id="IPR023955">
    <property type="entry name" value="TagBP_aldolase_GatY"/>
</dbReference>
<dbReference type="NCBIfam" id="TIGR00167">
    <property type="entry name" value="cbbA"/>
    <property type="match status" value="1"/>
</dbReference>
<dbReference type="NCBIfam" id="NF006626">
    <property type="entry name" value="PRK09195.1"/>
    <property type="match status" value="1"/>
</dbReference>
<dbReference type="NCBIfam" id="NF009374">
    <property type="entry name" value="PRK12737.1"/>
    <property type="match status" value="1"/>
</dbReference>
<dbReference type="NCBIfam" id="TIGR01858">
    <property type="entry name" value="tag_bisphos_ald"/>
    <property type="match status" value="1"/>
</dbReference>
<dbReference type="PANTHER" id="PTHR30304">
    <property type="entry name" value="D-TAGATOSE-1,6-BISPHOSPHATE ALDOLASE"/>
    <property type="match status" value="1"/>
</dbReference>
<dbReference type="PANTHER" id="PTHR30304:SF0">
    <property type="entry name" value="D-TAGATOSE-1,6-BISPHOSPHATE ALDOLASE SUBUNIT GATY-RELATED"/>
    <property type="match status" value="1"/>
</dbReference>
<dbReference type="Pfam" id="PF01116">
    <property type="entry name" value="F_bP_aldolase"/>
    <property type="match status" value="1"/>
</dbReference>
<dbReference type="PIRSF" id="PIRSF001359">
    <property type="entry name" value="F_bP_aldolase_II"/>
    <property type="match status" value="1"/>
</dbReference>
<dbReference type="SUPFAM" id="SSF51569">
    <property type="entry name" value="Aldolase"/>
    <property type="match status" value="1"/>
</dbReference>
<dbReference type="PROSITE" id="PS00602">
    <property type="entry name" value="ALDOLASE_CLASS_II_1"/>
    <property type="match status" value="1"/>
</dbReference>
<dbReference type="PROSITE" id="PS00806">
    <property type="entry name" value="ALDOLASE_CLASS_II_2"/>
    <property type="match status" value="1"/>
</dbReference>
<evidence type="ECO:0000255" key="1">
    <source>
        <dbReference type="HAMAP-Rule" id="MF_01294"/>
    </source>
</evidence>
<name>GATY_SHIB3</name>
<comment type="function">
    <text evidence="1">Catalytic subunit of the tagatose-1,6-bisphosphate aldolase GatYZ, which catalyzes the reversible aldol condensation of dihydroxyacetone phosphate (DHAP or glycerone-phosphate) with glyceraldehyde 3-phosphate (G3P) to produce tagatose 1,6-bisphosphate (TBP). Requires GatZ subunit for full activity and stability. Is involved in the catabolism of galactitol.</text>
</comment>
<comment type="catalytic activity">
    <reaction evidence="1">
        <text>D-tagatofuranose 1,6-bisphosphate = D-glyceraldehyde 3-phosphate + dihydroxyacetone phosphate</text>
        <dbReference type="Rhea" id="RHEA:22948"/>
        <dbReference type="ChEBI" id="CHEBI:57642"/>
        <dbReference type="ChEBI" id="CHEBI:58694"/>
        <dbReference type="ChEBI" id="CHEBI:59776"/>
        <dbReference type="EC" id="4.1.2.40"/>
    </reaction>
</comment>
<comment type="cofactor">
    <cofactor evidence="1">
        <name>Zn(2+)</name>
        <dbReference type="ChEBI" id="CHEBI:29105"/>
    </cofactor>
    <text evidence="1">Binds 1 zinc ion per subunit.</text>
</comment>
<comment type="pathway">
    <text evidence="1">Carbohydrate metabolism; D-tagatose 6-phosphate degradation; D-glyceraldehyde 3-phosphate and glycerone phosphate from D-tagatose 6-phosphate: step 2/2.</text>
</comment>
<comment type="subunit">
    <text evidence="1">Forms a complex with GatZ.</text>
</comment>
<comment type="similarity">
    <text evidence="1">Belongs to the class II fructose-bisphosphate aldolase family. TagBP aldolase GatY subfamily.</text>
</comment>